<dbReference type="EC" id="1.1.1.27" evidence="2"/>
<dbReference type="EMBL" id="AF079819">
    <property type="protein sequence ID" value="AAC63277.1"/>
    <property type="molecule type" value="mRNA"/>
</dbReference>
<dbReference type="SMR" id="P69080"/>
<dbReference type="UniPathway" id="UPA00554">
    <property type="reaction ID" value="UER00611"/>
</dbReference>
<dbReference type="GO" id="GO:0005737">
    <property type="term" value="C:cytoplasm"/>
    <property type="evidence" value="ECO:0007669"/>
    <property type="project" value="UniProtKB-SubCell"/>
</dbReference>
<dbReference type="GO" id="GO:0004459">
    <property type="term" value="F:L-lactate dehydrogenase activity"/>
    <property type="evidence" value="ECO:0007669"/>
    <property type="project" value="UniProtKB-EC"/>
</dbReference>
<dbReference type="GO" id="GO:0006089">
    <property type="term" value="P:lactate metabolic process"/>
    <property type="evidence" value="ECO:0007669"/>
    <property type="project" value="TreeGrafter"/>
</dbReference>
<dbReference type="CDD" id="cd05293">
    <property type="entry name" value="LDH_1"/>
    <property type="match status" value="1"/>
</dbReference>
<dbReference type="FunFam" id="3.40.50.720:FF:000029">
    <property type="entry name" value="L-lactate dehydrogenase A chain"/>
    <property type="match status" value="1"/>
</dbReference>
<dbReference type="FunFam" id="3.90.110.10:FF:000003">
    <property type="entry name" value="L-lactate dehydrogenase A chain"/>
    <property type="match status" value="1"/>
</dbReference>
<dbReference type="Gene3D" id="3.90.110.10">
    <property type="entry name" value="Lactate dehydrogenase/glycoside hydrolase, family 4, C-terminal"/>
    <property type="match status" value="1"/>
</dbReference>
<dbReference type="Gene3D" id="3.40.50.720">
    <property type="entry name" value="NAD(P)-binding Rossmann-like Domain"/>
    <property type="match status" value="1"/>
</dbReference>
<dbReference type="HAMAP" id="MF_00488">
    <property type="entry name" value="Lactate_dehydrog"/>
    <property type="match status" value="1"/>
</dbReference>
<dbReference type="InterPro" id="IPR001557">
    <property type="entry name" value="L-lactate/malate_DH"/>
</dbReference>
<dbReference type="InterPro" id="IPR011304">
    <property type="entry name" value="L-lactate_DH"/>
</dbReference>
<dbReference type="InterPro" id="IPR018177">
    <property type="entry name" value="L-lactate_DH_AS"/>
</dbReference>
<dbReference type="InterPro" id="IPR022383">
    <property type="entry name" value="Lactate/malate_DH_C"/>
</dbReference>
<dbReference type="InterPro" id="IPR001236">
    <property type="entry name" value="Lactate/malate_DH_N"/>
</dbReference>
<dbReference type="InterPro" id="IPR015955">
    <property type="entry name" value="Lactate_DH/Glyco_Ohase_4_C"/>
</dbReference>
<dbReference type="InterPro" id="IPR036291">
    <property type="entry name" value="NAD(P)-bd_dom_sf"/>
</dbReference>
<dbReference type="NCBIfam" id="TIGR01771">
    <property type="entry name" value="L-LDH-NAD"/>
    <property type="match status" value="1"/>
</dbReference>
<dbReference type="NCBIfam" id="NF000824">
    <property type="entry name" value="PRK00066.1"/>
    <property type="match status" value="1"/>
</dbReference>
<dbReference type="NCBIfam" id="NF004863">
    <property type="entry name" value="PRK06223.1"/>
    <property type="match status" value="1"/>
</dbReference>
<dbReference type="PANTHER" id="PTHR43128">
    <property type="entry name" value="L-2-HYDROXYCARBOXYLATE DEHYDROGENASE (NAD(P)(+))"/>
    <property type="match status" value="1"/>
</dbReference>
<dbReference type="PANTHER" id="PTHR43128:SF10">
    <property type="entry name" value="L-LACTATE DEHYDROGENASE A CHAIN"/>
    <property type="match status" value="1"/>
</dbReference>
<dbReference type="Pfam" id="PF02866">
    <property type="entry name" value="Ldh_1_C"/>
    <property type="match status" value="1"/>
</dbReference>
<dbReference type="Pfam" id="PF00056">
    <property type="entry name" value="Ldh_1_N"/>
    <property type="match status" value="1"/>
</dbReference>
<dbReference type="PIRSF" id="PIRSF000102">
    <property type="entry name" value="Lac_mal_DH"/>
    <property type="match status" value="1"/>
</dbReference>
<dbReference type="PRINTS" id="PR00086">
    <property type="entry name" value="LLDHDRGNASE"/>
</dbReference>
<dbReference type="SUPFAM" id="SSF56327">
    <property type="entry name" value="LDH C-terminal domain-like"/>
    <property type="match status" value="1"/>
</dbReference>
<dbReference type="SUPFAM" id="SSF51735">
    <property type="entry name" value="NAD(P)-binding Rossmann-fold domains"/>
    <property type="match status" value="1"/>
</dbReference>
<dbReference type="PROSITE" id="PS00064">
    <property type="entry name" value="L_LDH"/>
    <property type="match status" value="1"/>
</dbReference>
<evidence type="ECO:0000250" key="1"/>
<evidence type="ECO:0000250" key="2">
    <source>
        <dbReference type="UniProtKB" id="P00338"/>
    </source>
</evidence>
<evidence type="ECO:0000305" key="3"/>
<name>LDHA_CHAAC</name>
<gene>
    <name type="primary">ldha</name>
</gene>
<feature type="initiator methionine" description="Removed" evidence="1">
    <location>
        <position position="1"/>
    </location>
</feature>
<feature type="chain" id="PRO_0000168430" description="L-lactate dehydrogenase A chain">
    <location>
        <begin position="2"/>
        <end position="331"/>
    </location>
</feature>
<feature type="active site" description="Proton acceptor" evidence="1">
    <location>
        <position position="192"/>
    </location>
</feature>
<feature type="binding site" evidence="1">
    <location>
        <begin position="29"/>
        <end position="57"/>
    </location>
    <ligand>
        <name>NAD(+)</name>
        <dbReference type="ChEBI" id="CHEBI:57540"/>
    </ligand>
</feature>
<feature type="binding site" evidence="1">
    <location>
        <position position="98"/>
    </location>
    <ligand>
        <name>NAD(+)</name>
        <dbReference type="ChEBI" id="CHEBI:57540"/>
    </ligand>
</feature>
<feature type="binding site" evidence="1">
    <location>
        <position position="105"/>
    </location>
    <ligand>
        <name>substrate</name>
    </ligand>
</feature>
<feature type="binding site" evidence="1">
    <location>
        <position position="137"/>
    </location>
    <ligand>
        <name>NAD(+)</name>
        <dbReference type="ChEBI" id="CHEBI:57540"/>
    </ligand>
</feature>
<feature type="binding site" evidence="1">
    <location>
        <position position="137"/>
    </location>
    <ligand>
        <name>substrate</name>
    </ligand>
</feature>
<feature type="binding site" evidence="1">
    <location>
        <position position="168"/>
    </location>
    <ligand>
        <name>substrate</name>
    </ligand>
</feature>
<feature type="binding site" evidence="1">
    <location>
        <position position="247"/>
    </location>
    <ligand>
        <name>substrate</name>
    </ligand>
</feature>
<comment type="function">
    <text evidence="2">Interconverts simultaneously and stereospecifically pyruvate and lactate with concomitant interconversion of NADH and NAD(+).</text>
</comment>
<comment type="catalytic activity">
    <reaction evidence="2">
        <text>(S)-lactate + NAD(+) = pyruvate + NADH + H(+)</text>
        <dbReference type="Rhea" id="RHEA:23444"/>
        <dbReference type="ChEBI" id="CHEBI:15361"/>
        <dbReference type="ChEBI" id="CHEBI:15378"/>
        <dbReference type="ChEBI" id="CHEBI:16651"/>
        <dbReference type="ChEBI" id="CHEBI:57540"/>
        <dbReference type="ChEBI" id="CHEBI:57945"/>
        <dbReference type="EC" id="1.1.1.27"/>
    </reaction>
    <physiologicalReaction direction="left-to-right" evidence="2">
        <dbReference type="Rhea" id="RHEA:23445"/>
    </physiologicalReaction>
    <physiologicalReaction direction="right-to-left" evidence="2">
        <dbReference type="Rhea" id="RHEA:23446"/>
    </physiologicalReaction>
</comment>
<comment type="pathway">
    <text evidence="2">Fermentation; pyruvate fermentation to lactate; (S)-lactate from pyruvate: step 1/1.</text>
</comment>
<comment type="subunit">
    <text evidence="1">Homotetramer.</text>
</comment>
<comment type="subcellular location">
    <subcellularLocation>
        <location evidence="1">Cytoplasm</location>
    </subcellularLocation>
</comment>
<comment type="similarity">
    <text evidence="3">Belongs to the LDH/MDH superfamily. LDH family.</text>
</comment>
<reference key="1">
    <citation type="journal article" date="1998" name="Proc. Natl. Acad. Sci. U.S.A.">
        <title>Hot spots in cold adaptation: localized increases in conformational flexibility in lactate dehydrogenase A4 orthologs of Antarctic notothenioid fishes.</title>
        <authorList>
            <person name="Fields P.A."/>
            <person name="Somero G.N."/>
        </authorList>
    </citation>
    <scope>NUCLEOTIDE SEQUENCE [MRNA]</scope>
    <source>
        <tissue>Muscle</tissue>
    </source>
</reference>
<protein>
    <recommendedName>
        <fullName>L-lactate dehydrogenase A chain</fullName>
        <shortName>LDH-A</shortName>
        <ecNumber evidence="2">1.1.1.27</ecNumber>
    </recommendedName>
</protein>
<accession>P69080</accession>
<accession>O93619</accession>
<organism>
    <name type="scientific">Chaenocephalus aceratus</name>
    <name type="common">Blackfin icefish</name>
    <name type="synonym">Chaenichthys aceratus</name>
    <dbReference type="NCBI Taxonomy" id="36190"/>
    <lineage>
        <taxon>Eukaryota</taxon>
        <taxon>Metazoa</taxon>
        <taxon>Chordata</taxon>
        <taxon>Craniata</taxon>
        <taxon>Vertebrata</taxon>
        <taxon>Euteleostomi</taxon>
        <taxon>Actinopterygii</taxon>
        <taxon>Neopterygii</taxon>
        <taxon>Teleostei</taxon>
        <taxon>Neoteleostei</taxon>
        <taxon>Acanthomorphata</taxon>
        <taxon>Eupercaria</taxon>
        <taxon>Perciformes</taxon>
        <taxon>Notothenioidei</taxon>
        <taxon>Channichthyidae</taxon>
        <taxon>Chaenocephalus</taxon>
    </lineage>
</organism>
<sequence>MSTKEKLISHVMKEEPVGSRNKVTVVGVGMVGMASAISILLKDLCDELAMVDVMEDKLKGEVMDLQHGSLFLKTKIVGDKDYSVTANSKVVVVTAGARQQEGESRLNLVQRNVNIFKFIIPNIVKYSPNCILMVVSNPVDILTYVAWKLSGFPRHRVIGSGTNLDSARFRHLIGEKLHLHPSSCHAWIVGEHGDSSVPVWSGVNVAGVSLQGLNPQMGTEGDGENWKAIHKEVVDGAYEVIKLKGYTSWAIGMSVADLVESIIKNMHKVHPVSTLVQGMHGVKDEVFLSVPCVLGNSGLTDVIHMTLKAEEEKQLQKSAETLWGVQKELTL</sequence>
<proteinExistence type="evidence at transcript level"/>
<keyword id="KW-0963">Cytoplasm</keyword>
<keyword id="KW-0520">NAD</keyword>
<keyword id="KW-0560">Oxidoreductase</keyword>